<feature type="chain" id="PRO_0000265455" description="Small ribosomal subunit protein uS19">
    <location>
        <begin position="1"/>
        <end position="94"/>
    </location>
</feature>
<accession>Q0AUI4</accession>
<evidence type="ECO:0000255" key="1">
    <source>
        <dbReference type="HAMAP-Rule" id="MF_00531"/>
    </source>
</evidence>
<evidence type="ECO:0000305" key="2"/>
<organism>
    <name type="scientific">Syntrophomonas wolfei subsp. wolfei (strain DSM 2245B / Goettingen)</name>
    <dbReference type="NCBI Taxonomy" id="335541"/>
    <lineage>
        <taxon>Bacteria</taxon>
        <taxon>Bacillati</taxon>
        <taxon>Bacillota</taxon>
        <taxon>Clostridia</taxon>
        <taxon>Eubacteriales</taxon>
        <taxon>Syntrophomonadaceae</taxon>
        <taxon>Syntrophomonas</taxon>
    </lineage>
</organism>
<name>RS19_SYNWW</name>
<proteinExistence type="inferred from homology"/>
<comment type="function">
    <text evidence="1">Protein S19 forms a complex with S13 that binds strongly to the 16S ribosomal RNA.</text>
</comment>
<comment type="similarity">
    <text evidence="1">Belongs to the universal ribosomal protein uS19 family.</text>
</comment>
<reference key="1">
    <citation type="journal article" date="2010" name="Environ. Microbiol.">
        <title>The genome of Syntrophomonas wolfei: new insights into syntrophic metabolism and biohydrogen production.</title>
        <authorList>
            <person name="Sieber J.R."/>
            <person name="Sims D.R."/>
            <person name="Han C."/>
            <person name="Kim E."/>
            <person name="Lykidis A."/>
            <person name="Lapidus A.L."/>
            <person name="McDonnald E."/>
            <person name="Rohlin L."/>
            <person name="Culley D.E."/>
            <person name="Gunsalus R."/>
            <person name="McInerney M.J."/>
        </authorList>
    </citation>
    <scope>NUCLEOTIDE SEQUENCE [LARGE SCALE GENOMIC DNA]</scope>
    <source>
        <strain>DSM 2245B / Goettingen</strain>
    </source>
</reference>
<keyword id="KW-1185">Reference proteome</keyword>
<keyword id="KW-0687">Ribonucleoprotein</keyword>
<keyword id="KW-0689">Ribosomal protein</keyword>
<keyword id="KW-0694">RNA-binding</keyword>
<keyword id="KW-0699">rRNA-binding</keyword>
<protein>
    <recommendedName>
        <fullName evidence="1">Small ribosomal subunit protein uS19</fullName>
    </recommendedName>
    <alternativeName>
        <fullName evidence="2">30S ribosomal protein S19</fullName>
    </alternativeName>
</protein>
<gene>
    <name evidence="1" type="primary">rpsS</name>
    <name type="ordered locus">Swol_2329</name>
</gene>
<dbReference type="EMBL" id="CP000448">
    <property type="protein sequence ID" value="ABI69620.1"/>
    <property type="molecule type" value="Genomic_DNA"/>
</dbReference>
<dbReference type="RefSeq" id="WP_011641704.1">
    <property type="nucleotide sequence ID" value="NC_008346.1"/>
</dbReference>
<dbReference type="SMR" id="Q0AUI4"/>
<dbReference type="STRING" id="335541.Swol_2329"/>
<dbReference type="KEGG" id="swo:Swol_2329"/>
<dbReference type="eggNOG" id="COG0185">
    <property type="taxonomic scope" value="Bacteria"/>
</dbReference>
<dbReference type="HOGENOM" id="CLU_144911_0_1_9"/>
<dbReference type="OrthoDB" id="9797833at2"/>
<dbReference type="Proteomes" id="UP000001968">
    <property type="component" value="Chromosome"/>
</dbReference>
<dbReference type="GO" id="GO:0005737">
    <property type="term" value="C:cytoplasm"/>
    <property type="evidence" value="ECO:0007669"/>
    <property type="project" value="UniProtKB-ARBA"/>
</dbReference>
<dbReference type="GO" id="GO:0015935">
    <property type="term" value="C:small ribosomal subunit"/>
    <property type="evidence" value="ECO:0007669"/>
    <property type="project" value="InterPro"/>
</dbReference>
<dbReference type="GO" id="GO:0019843">
    <property type="term" value="F:rRNA binding"/>
    <property type="evidence" value="ECO:0007669"/>
    <property type="project" value="UniProtKB-UniRule"/>
</dbReference>
<dbReference type="GO" id="GO:0003735">
    <property type="term" value="F:structural constituent of ribosome"/>
    <property type="evidence" value="ECO:0007669"/>
    <property type="project" value="InterPro"/>
</dbReference>
<dbReference type="GO" id="GO:0000028">
    <property type="term" value="P:ribosomal small subunit assembly"/>
    <property type="evidence" value="ECO:0007669"/>
    <property type="project" value="TreeGrafter"/>
</dbReference>
<dbReference type="GO" id="GO:0006412">
    <property type="term" value="P:translation"/>
    <property type="evidence" value="ECO:0007669"/>
    <property type="project" value="UniProtKB-UniRule"/>
</dbReference>
<dbReference type="FunFam" id="3.30.860.10:FF:000001">
    <property type="entry name" value="30S ribosomal protein S19"/>
    <property type="match status" value="1"/>
</dbReference>
<dbReference type="Gene3D" id="3.30.860.10">
    <property type="entry name" value="30s Ribosomal Protein S19, Chain A"/>
    <property type="match status" value="1"/>
</dbReference>
<dbReference type="HAMAP" id="MF_00531">
    <property type="entry name" value="Ribosomal_uS19"/>
    <property type="match status" value="1"/>
</dbReference>
<dbReference type="InterPro" id="IPR002222">
    <property type="entry name" value="Ribosomal_uS19"/>
</dbReference>
<dbReference type="InterPro" id="IPR005732">
    <property type="entry name" value="Ribosomal_uS19_bac-type"/>
</dbReference>
<dbReference type="InterPro" id="IPR020934">
    <property type="entry name" value="Ribosomal_uS19_CS"/>
</dbReference>
<dbReference type="InterPro" id="IPR023575">
    <property type="entry name" value="Ribosomal_uS19_SF"/>
</dbReference>
<dbReference type="NCBIfam" id="TIGR01050">
    <property type="entry name" value="rpsS_bact"/>
    <property type="match status" value="1"/>
</dbReference>
<dbReference type="PANTHER" id="PTHR11880">
    <property type="entry name" value="RIBOSOMAL PROTEIN S19P FAMILY MEMBER"/>
    <property type="match status" value="1"/>
</dbReference>
<dbReference type="PANTHER" id="PTHR11880:SF8">
    <property type="entry name" value="SMALL RIBOSOMAL SUBUNIT PROTEIN US19M"/>
    <property type="match status" value="1"/>
</dbReference>
<dbReference type="Pfam" id="PF00203">
    <property type="entry name" value="Ribosomal_S19"/>
    <property type="match status" value="1"/>
</dbReference>
<dbReference type="PIRSF" id="PIRSF002144">
    <property type="entry name" value="Ribosomal_S19"/>
    <property type="match status" value="1"/>
</dbReference>
<dbReference type="PRINTS" id="PR00975">
    <property type="entry name" value="RIBOSOMALS19"/>
</dbReference>
<dbReference type="SUPFAM" id="SSF54570">
    <property type="entry name" value="Ribosomal protein S19"/>
    <property type="match status" value="1"/>
</dbReference>
<dbReference type="PROSITE" id="PS00323">
    <property type="entry name" value="RIBOSOMAL_S19"/>
    <property type="match status" value="1"/>
</dbReference>
<sequence>MGRSLKKGPYCEDKLLKKIELMNQSGQKKVIKTWSRRSTIMPEMIGHTLAVHDGRKHIPVYVTEDMVGMKLGEFAPTRTYRGHAGKSEKSSRAR</sequence>